<protein>
    <recommendedName>
        <fullName evidence="1">Nucleoside diphosphate kinase</fullName>
        <shortName evidence="1">NDK</shortName>
        <shortName evidence="1">NDP kinase</shortName>
        <ecNumber evidence="1">2.7.4.6</ecNumber>
    </recommendedName>
    <alternativeName>
        <fullName evidence="1">Nucleoside-2-P kinase</fullName>
    </alternativeName>
</protein>
<proteinExistence type="inferred from homology"/>
<dbReference type="EC" id="2.7.4.6" evidence="1"/>
<dbReference type="EMBL" id="CP000468">
    <property type="protein sequence ID" value="ABJ01946.1"/>
    <property type="molecule type" value="Genomic_DNA"/>
</dbReference>
<dbReference type="RefSeq" id="WP_000963841.1">
    <property type="nucleotide sequence ID" value="NZ_CADILS010000012.1"/>
</dbReference>
<dbReference type="SMR" id="A1AE56"/>
<dbReference type="GeneID" id="86947407"/>
<dbReference type="KEGG" id="ecv:APECO1_4006"/>
<dbReference type="HOGENOM" id="CLU_060216_8_1_6"/>
<dbReference type="Proteomes" id="UP000008216">
    <property type="component" value="Chromosome"/>
</dbReference>
<dbReference type="GO" id="GO:0005737">
    <property type="term" value="C:cytoplasm"/>
    <property type="evidence" value="ECO:0007669"/>
    <property type="project" value="UniProtKB-SubCell"/>
</dbReference>
<dbReference type="GO" id="GO:0005524">
    <property type="term" value="F:ATP binding"/>
    <property type="evidence" value="ECO:0007669"/>
    <property type="project" value="UniProtKB-UniRule"/>
</dbReference>
<dbReference type="GO" id="GO:0046872">
    <property type="term" value="F:metal ion binding"/>
    <property type="evidence" value="ECO:0007669"/>
    <property type="project" value="UniProtKB-KW"/>
</dbReference>
<dbReference type="GO" id="GO:0004550">
    <property type="term" value="F:nucleoside diphosphate kinase activity"/>
    <property type="evidence" value="ECO:0007669"/>
    <property type="project" value="UniProtKB-UniRule"/>
</dbReference>
<dbReference type="GO" id="GO:0006241">
    <property type="term" value="P:CTP biosynthetic process"/>
    <property type="evidence" value="ECO:0007669"/>
    <property type="project" value="UniProtKB-UniRule"/>
</dbReference>
<dbReference type="GO" id="GO:0006183">
    <property type="term" value="P:GTP biosynthetic process"/>
    <property type="evidence" value="ECO:0007669"/>
    <property type="project" value="UniProtKB-UniRule"/>
</dbReference>
<dbReference type="GO" id="GO:0006228">
    <property type="term" value="P:UTP biosynthetic process"/>
    <property type="evidence" value="ECO:0007669"/>
    <property type="project" value="UniProtKB-UniRule"/>
</dbReference>
<dbReference type="CDD" id="cd04413">
    <property type="entry name" value="NDPk_I"/>
    <property type="match status" value="1"/>
</dbReference>
<dbReference type="FunFam" id="3.30.70.141:FF:000001">
    <property type="entry name" value="Nucleoside diphosphate kinase"/>
    <property type="match status" value="1"/>
</dbReference>
<dbReference type="Gene3D" id="3.30.70.141">
    <property type="entry name" value="Nucleoside diphosphate kinase-like domain"/>
    <property type="match status" value="1"/>
</dbReference>
<dbReference type="HAMAP" id="MF_00451">
    <property type="entry name" value="NDP_kinase"/>
    <property type="match status" value="1"/>
</dbReference>
<dbReference type="InterPro" id="IPR034907">
    <property type="entry name" value="NDK-like_dom"/>
</dbReference>
<dbReference type="InterPro" id="IPR036850">
    <property type="entry name" value="NDK-like_dom_sf"/>
</dbReference>
<dbReference type="InterPro" id="IPR001564">
    <property type="entry name" value="Nucleoside_diP_kinase"/>
</dbReference>
<dbReference type="InterPro" id="IPR023005">
    <property type="entry name" value="Nucleoside_diP_kinase_AS"/>
</dbReference>
<dbReference type="NCBIfam" id="NF001908">
    <property type="entry name" value="PRK00668.1"/>
    <property type="match status" value="1"/>
</dbReference>
<dbReference type="PANTHER" id="PTHR46161">
    <property type="entry name" value="NUCLEOSIDE DIPHOSPHATE KINASE"/>
    <property type="match status" value="1"/>
</dbReference>
<dbReference type="PANTHER" id="PTHR46161:SF3">
    <property type="entry name" value="NUCLEOSIDE DIPHOSPHATE KINASE DDB_G0292928-RELATED"/>
    <property type="match status" value="1"/>
</dbReference>
<dbReference type="Pfam" id="PF00334">
    <property type="entry name" value="NDK"/>
    <property type="match status" value="1"/>
</dbReference>
<dbReference type="PRINTS" id="PR01243">
    <property type="entry name" value="NUCDPKINASE"/>
</dbReference>
<dbReference type="SMART" id="SM00562">
    <property type="entry name" value="NDK"/>
    <property type="match status" value="1"/>
</dbReference>
<dbReference type="SUPFAM" id="SSF54919">
    <property type="entry name" value="Nucleoside diphosphate kinase, NDK"/>
    <property type="match status" value="1"/>
</dbReference>
<dbReference type="PROSITE" id="PS00469">
    <property type="entry name" value="NDPK"/>
    <property type="match status" value="1"/>
</dbReference>
<dbReference type="PROSITE" id="PS51374">
    <property type="entry name" value="NDPK_LIKE"/>
    <property type="match status" value="1"/>
</dbReference>
<feature type="chain" id="PRO_1000026231" description="Nucleoside diphosphate kinase">
    <location>
        <begin position="1"/>
        <end position="143"/>
    </location>
</feature>
<feature type="active site" description="Pros-phosphohistidine intermediate" evidence="1">
    <location>
        <position position="117"/>
    </location>
</feature>
<feature type="binding site" evidence="1">
    <location>
        <position position="11"/>
    </location>
    <ligand>
        <name>ATP</name>
        <dbReference type="ChEBI" id="CHEBI:30616"/>
    </ligand>
</feature>
<feature type="binding site" evidence="1">
    <location>
        <position position="59"/>
    </location>
    <ligand>
        <name>ATP</name>
        <dbReference type="ChEBI" id="CHEBI:30616"/>
    </ligand>
</feature>
<feature type="binding site" evidence="1">
    <location>
        <position position="87"/>
    </location>
    <ligand>
        <name>ATP</name>
        <dbReference type="ChEBI" id="CHEBI:30616"/>
    </ligand>
</feature>
<feature type="binding site" evidence="1">
    <location>
        <position position="93"/>
    </location>
    <ligand>
        <name>ATP</name>
        <dbReference type="ChEBI" id="CHEBI:30616"/>
    </ligand>
</feature>
<feature type="binding site" evidence="1">
    <location>
        <position position="104"/>
    </location>
    <ligand>
        <name>ATP</name>
        <dbReference type="ChEBI" id="CHEBI:30616"/>
    </ligand>
</feature>
<feature type="binding site" evidence="1">
    <location>
        <position position="114"/>
    </location>
    <ligand>
        <name>ATP</name>
        <dbReference type="ChEBI" id="CHEBI:30616"/>
    </ligand>
</feature>
<reference key="1">
    <citation type="journal article" date="2007" name="J. Bacteriol.">
        <title>The genome sequence of avian pathogenic Escherichia coli strain O1:K1:H7 shares strong similarities with human extraintestinal pathogenic E. coli genomes.</title>
        <authorList>
            <person name="Johnson T.J."/>
            <person name="Kariyawasam S."/>
            <person name="Wannemuehler Y."/>
            <person name="Mangiamele P."/>
            <person name="Johnson S.J."/>
            <person name="Doetkott C."/>
            <person name="Skyberg J.A."/>
            <person name="Lynne A.M."/>
            <person name="Johnson J.R."/>
            <person name="Nolan L.K."/>
        </authorList>
    </citation>
    <scope>NUCLEOTIDE SEQUENCE [LARGE SCALE GENOMIC DNA]</scope>
</reference>
<keyword id="KW-0067">ATP-binding</keyword>
<keyword id="KW-0963">Cytoplasm</keyword>
<keyword id="KW-0418">Kinase</keyword>
<keyword id="KW-0460">Magnesium</keyword>
<keyword id="KW-0479">Metal-binding</keyword>
<keyword id="KW-0546">Nucleotide metabolism</keyword>
<keyword id="KW-0547">Nucleotide-binding</keyword>
<keyword id="KW-0597">Phosphoprotein</keyword>
<keyword id="KW-1185">Reference proteome</keyword>
<keyword id="KW-0808">Transferase</keyword>
<sequence length="143" mass="15436">MAIERTFSIIKPNAVAKNVIGSIFARFEAAGFKIVGTKMLHLTVEQARGFYAEHDGKPFFDGLVEFMTSGPIVVSVLEGENAVQRHRDLLGATNPANALAGTLRADYADSLTENGTHGSDSVESAAREIAYFFGEGEVCPRTR</sequence>
<evidence type="ECO:0000255" key="1">
    <source>
        <dbReference type="HAMAP-Rule" id="MF_00451"/>
    </source>
</evidence>
<comment type="function">
    <text evidence="1">Major role in the synthesis of nucleoside triphosphates other than ATP. The ATP gamma phosphate is transferred to the NDP beta phosphate via a ping-pong mechanism, using a phosphorylated active-site intermediate.</text>
</comment>
<comment type="catalytic activity">
    <reaction evidence="1">
        <text>a 2'-deoxyribonucleoside 5'-diphosphate + ATP = a 2'-deoxyribonucleoside 5'-triphosphate + ADP</text>
        <dbReference type="Rhea" id="RHEA:44640"/>
        <dbReference type="ChEBI" id="CHEBI:30616"/>
        <dbReference type="ChEBI" id="CHEBI:61560"/>
        <dbReference type="ChEBI" id="CHEBI:73316"/>
        <dbReference type="ChEBI" id="CHEBI:456216"/>
        <dbReference type="EC" id="2.7.4.6"/>
    </reaction>
</comment>
<comment type="catalytic activity">
    <reaction evidence="1">
        <text>a ribonucleoside 5'-diphosphate + ATP = a ribonucleoside 5'-triphosphate + ADP</text>
        <dbReference type="Rhea" id="RHEA:18113"/>
        <dbReference type="ChEBI" id="CHEBI:30616"/>
        <dbReference type="ChEBI" id="CHEBI:57930"/>
        <dbReference type="ChEBI" id="CHEBI:61557"/>
        <dbReference type="ChEBI" id="CHEBI:456216"/>
        <dbReference type="EC" id="2.7.4.6"/>
    </reaction>
</comment>
<comment type="cofactor">
    <cofactor evidence="1">
        <name>Mg(2+)</name>
        <dbReference type="ChEBI" id="CHEBI:18420"/>
    </cofactor>
</comment>
<comment type="subunit">
    <text evidence="1">Homotetramer.</text>
</comment>
<comment type="subcellular location">
    <subcellularLocation>
        <location evidence="1">Cytoplasm</location>
    </subcellularLocation>
</comment>
<comment type="similarity">
    <text evidence="1">Belongs to the NDK family.</text>
</comment>
<gene>
    <name evidence="1" type="primary">ndk</name>
    <name type="ordered locus">Ecok1_24520</name>
    <name type="ORF">APECO1_4006</name>
</gene>
<accession>A1AE56</accession>
<name>NDK_ECOK1</name>
<organism>
    <name type="scientific">Escherichia coli O1:K1 / APEC</name>
    <dbReference type="NCBI Taxonomy" id="405955"/>
    <lineage>
        <taxon>Bacteria</taxon>
        <taxon>Pseudomonadati</taxon>
        <taxon>Pseudomonadota</taxon>
        <taxon>Gammaproteobacteria</taxon>
        <taxon>Enterobacterales</taxon>
        <taxon>Enterobacteriaceae</taxon>
        <taxon>Escherichia</taxon>
    </lineage>
</organism>